<gene>
    <name type="primary">incF</name>
    <name type="ordered locus">CT_117</name>
</gene>
<proteinExistence type="inferred from homology"/>
<comment type="function">
    <text evidence="1">Inclusion membrane protein probably involved in early modification events of the chlamydial inclusion.</text>
</comment>
<comment type="subcellular location">
    <subcellularLocation>
        <location evidence="1">Secreted</location>
    </subcellularLocation>
    <subcellularLocation>
        <location evidence="1">Host vacuole</location>
        <location evidence="1">Host pathogen-containing vacuole</location>
        <location evidence="1">Host pathogen-containing vacuole membrane</location>
        <topology evidence="2">Multi-pass membrane protein</topology>
    </subcellularLocation>
    <text evidence="1">Secreted, probably by a type III secretion system (By similarity). Localized in the inclusion membrane (By similarity).</text>
</comment>
<reference key="1">
    <citation type="journal article" date="1998" name="Science">
        <title>Genome sequence of an obligate intracellular pathogen of humans: Chlamydia trachomatis.</title>
        <authorList>
            <person name="Stephens R.S."/>
            <person name="Kalman S."/>
            <person name="Lammel C.J."/>
            <person name="Fan J."/>
            <person name="Marathe R."/>
            <person name="Aravind L."/>
            <person name="Mitchell W.P."/>
            <person name="Olinger L."/>
            <person name="Tatusov R.L."/>
            <person name="Zhao Q."/>
            <person name="Koonin E.V."/>
            <person name="Davis R.W."/>
        </authorList>
    </citation>
    <scope>NUCLEOTIDE SEQUENCE [LARGE SCALE GENOMIC DNA]</scope>
    <source>
        <strain>ATCC VR-885 / DSM 19411 / UW-3/Cx</strain>
    </source>
</reference>
<accession>P0DJI5</accession>
<accession>O84119</accession>
<accession>Q9RPP9</accession>
<organism>
    <name type="scientific">Chlamydia trachomatis serovar D (strain ATCC VR-885 / DSM 19411 / UW-3/Cx)</name>
    <dbReference type="NCBI Taxonomy" id="272561"/>
    <lineage>
        <taxon>Bacteria</taxon>
        <taxon>Pseudomonadati</taxon>
        <taxon>Chlamydiota</taxon>
        <taxon>Chlamydiia</taxon>
        <taxon>Chlamydiales</taxon>
        <taxon>Chlamydiaceae</taxon>
        <taxon>Chlamydia/Chlamydophila group</taxon>
        <taxon>Chlamydia</taxon>
    </lineage>
</organism>
<name>INCF_CHLTR</name>
<dbReference type="EMBL" id="AE001273">
    <property type="protein sequence ID" value="AAC67708.1"/>
    <property type="molecule type" value="Genomic_DNA"/>
</dbReference>
<dbReference type="PIR" id="H71555">
    <property type="entry name" value="H71555"/>
</dbReference>
<dbReference type="RefSeq" id="NP_219620.1">
    <property type="nucleotide sequence ID" value="NC_000117.1"/>
</dbReference>
<dbReference type="RefSeq" id="WP_010725072.1">
    <property type="nucleotide sequence ID" value="NC_000117.1"/>
</dbReference>
<dbReference type="IntAct" id="P0DJI5">
    <property type="interactions" value="12"/>
</dbReference>
<dbReference type="MINT" id="P0DJI5"/>
<dbReference type="STRING" id="272561.CT_117"/>
<dbReference type="EnsemblBacteria" id="AAC67708">
    <property type="protein sequence ID" value="AAC67708"/>
    <property type="gene ID" value="CT_117"/>
</dbReference>
<dbReference type="GeneID" id="884080"/>
<dbReference type="KEGG" id="ctr:CT_117"/>
<dbReference type="PATRIC" id="fig|272561.5.peg.128"/>
<dbReference type="HOGENOM" id="CLU_2380989_0_0_0"/>
<dbReference type="InParanoid" id="P0DJI5"/>
<dbReference type="OrthoDB" id="9998323at2"/>
<dbReference type="Proteomes" id="UP000000431">
    <property type="component" value="Chromosome"/>
</dbReference>
<dbReference type="GO" id="GO:0005576">
    <property type="term" value="C:extracellular region"/>
    <property type="evidence" value="ECO:0007669"/>
    <property type="project" value="UniProtKB-SubCell"/>
</dbReference>
<dbReference type="GO" id="GO:0033644">
    <property type="term" value="C:host cell membrane"/>
    <property type="evidence" value="ECO:0007669"/>
    <property type="project" value="UniProtKB-KW"/>
</dbReference>
<dbReference type="GO" id="GO:0140221">
    <property type="term" value="C:pathogen-containing vacuole membrane"/>
    <property type="evidence" value="ECO:0007669"/>
    <property type="project" value="UniProtKB-SubCell"/>
</dbReference>
<dbReference type="InterPro" id="IPR035119">
    <property type="entry name" value="IncF"/>
</dbReference>
<dbReference type="Pfam" id="PF17626">
    <property type="entry name" value="IncF"/>
    <property type="match status" value="1"/>
</dbReference>
<sequence length="104" mass="10437">MGDVMIQSVKTESGLVEGHRGICDSLGRVVGALAKVAKLVVALAALVLNGALCVLSLVALCVGATPVGPLAVLVATTLASFLCAACVLFIAAKDRGWIASTNKC</sequence>
<feature type="chain" id="PRO_0000084203" description="Inclusion membrane protein F">
    <location>
        <begin position="1"/>
        <end position="104"/>
    </location>
</feature>
<feature type="transmembrane region" description="Helical" evidence="2">
    <location>
        <begin position="39"/>
        <end position="59"/>
    </location>
</feature>
<feature type="transmembrane region" description="Helical" evidence="2">
    <location>
        <begin position="70"/>
        <end position="90"/>
    </location>
</feature>
<protein>
    <recommendedName>
        <fullName>Inclusion membrane protein F</fullName>
    </recommendedName>
</protein>
<evidence type="ECO:0000250" key="1">
    <source>
        <dbReference type="UniProtKB" id="B0B9M5"/>
    </source>
</evidence>
<evidence type="ECO:0000255" key="2"/>
<keyword id="KW-1043">Host membrane</keyword>
<keyword id="KW-0472">Membrane</keyword>
<keyword id="KW-1185">Reference proteome</keyword>
<keyword id="KW-0964">Secreted</keyword>
<keyword id="KW-0812">Transmembrane</keyword>
<keyword id="KW-1133">Transmembrane helix</keyword>
<keyword id="KW-0843">Virulence</keyword>